<evidence type="ECO:0000255" key="1">
    <source>
        <dbReference type="HAMAP-Rule" id="MF_01300"/>
    </source>
</evidence>
<organism>
    <name type="scientific">Yersinia pestis bv. Antiqua (strain Antiqua)</name>
    <dbReference type="NCBI Taxonomy" id="360102"/>
    <lineage>
        <taxon>Bacteria</taxon>
        <taxon>Pseudomonadati</taxon>
        <taxon>Pseudomonadota</taxon>
        <taxon>Gammaproteobacteria</taxon>
        <taxon>Enterobacterales</taxon>
        <taxon>Yersiniaceae</taxon>
        <taxon>Yersinia</taxon>
    </lineage>
</organism>
<protein>
    <recommendedName>
        <fullName evidence="1">C4-dicarboxylate transport protein</fullName>
    </recommendedName>
</protein>
<proteinExistence type="inferred from homology"/>
<name>DCTA_YERPA</name>
<gene>
    <name evidence="1" type="primary">dctA</name>
    <name type="ordered locus">YPA_3820</name>
</gene>
<sequence>MKVSIFKTLYFQVLTAITIGVLLGHFYPEIGAQMKPLGDGFVKLIKMIIAPVIFCTVVTGIAGMESMKAVGRTGAIALLYFEIVSTLALLIGLVVVNVAQPGVGMNIDPATLDAKAVALYAEQASQQGIIPFLLDIIPGSVVGAFASGNILQVLLFAVLFGFALHRLGEKGQLIFNVIESFSRVIFGVINMIMRLAPLGAFGAMAFTIGKYGVGSLVQLGQLILCFYLTCILFVVLVLGTIAKFNGFNIFKFIRYIKEELLIVLGTSSSESVLPRMLDKMENAGCKKSVVGLVIPTGYSFNLDGTSIYLTMAAVFIAQATNTHMDIMHQVTLLVVLLLSSKGAAGVTGSGFIVLAATISAVGHLPLAGLALILGIDRFMSEARALTNLVGNGVATIVVAKWCKQLDNDQLQAVLSNKVLPNVKSSVSVS</sequence>
<dbReference type="EMBL" id="CP000308">
    <property type="protein sequence ID" value="ABG15782.1"/>
    <property type="molecule type" value="Genomic_DNA"/>
</dbReference>
<dbReference type="RefSeq" id="WP_002209553.1">
    <property type="nucleotide sequence ID" value="NZ_CP009906.1"/>
</dbReference>
<dbReference type="SMR" id="Q1C190"/>
<dbReference type="KEGG" id="ypa:YPA_3820"/>
<dbReference type="Proteomes" id="UP000001971">
    <property type="component" value="Chromosome"/>
</dbReference>
<dbReference type="GO" id="GO:0005886">
    <property type="term" value="C:plasma membrane"/>
    <property type="evidence" value="ECO:0007669"/>
    <property type="project" value="UniProtKB-SubCell"/>
</dbReference>
<dbReference type="GO" id="GO:0015138">
    <property type="term" value="F:fumarate transmembrane transporter activity"/>
    <property type="evidence" value="ECO:0007669"/>
    <property type="project" value="TreeGrafter"/>
</dbReference>
<dbReference type="GO" id="GO:0015366">
    <property type="term" value="F:malate:proton symporter activity"/>
    <property type="evidence" value="ECO:0007669"/>
    <property type="project" value="TreeGrafter"/>
</dbReference>
<dbReference type="GO" id="GO:0015141">
    <property type="term" value="F:succinate transmembrane transporter activity"/>
    <property type="evidence" value="ECO:0007669"/>
    <property type="project" value="TreeGrafter"/>
</dbReference>
<dbReference type="GO" id="GO:0070778">
    <property type="term" value="P:L-aspartate transmembrane transport"/>
    <property type="evidence" value="ECO:0007669"/>
    <property type="project" value="TreeGrafter"/>
</dbReference>
<dbReference type="FunFam" id="1.10.3860.10:FF:000001">
    <property type="entry name" value="C4-dicarboxylate transport protein"/>
    <property type="match status" value="1"/>
</dbReference>
<dbReference type="Gene3D" id="1.10.3860.10">
    <property type="entry name" value="Sodium:dicarboxylate symporter"/>
    <property type="match status" value="1"/>
</dbReference>
<dbReference type="HAMAP" id="MF_01300">
    <property type="entry name" value="C4_dicarb_transport"/>
    <property type="match status" value="1"/>
</dbReference>
<dbReference type="InterPro" id="IPR023954">
    <property type="entry name" value="C4_dicarb_transport"/>
</dbReference>
<dbReference type="InterPro" id="IPR001991">
    <property type="entry name" value="Na-dicarboxylate_symporter"/>
</dbReference>
<dbReference type="InterPro" id="IPR018107">
    <property type="entry name" value="Na-dicarboxylate_symporter_CS"/>
</dbReference>
<dbReference type="InterPro" id="IPR036458">
    <property type="entry name" value="Na:dicarbo_symporter_sf"/>
</dbReference>
<dbReference type="NCBIfam" id="NF002461">
    <property type="entry name" value="PRK01663.1"/>
    <property type="match status" value="1"/>
</dbReference>
<dbReference type="NCBIfam" id="NF009587">
    <property type="entry name" value="PRK13027.1"/>
    <property type="match status" value="1"/>
</dbReference>
<dbReference type="PANTHER" id="PTHR42865:SF1">
    <property type="entry name" value="AEROBIC C4-DICARBOXYLATE TRANSPORT PROTEIN"/>
    <property type="match status" value="1"/>
</dbReference>
<dbReference type="PANTHER" id="PTHR42865">
    <property type="entry name" value="PROTON/GLUTAMATE-ASPARTATE SYMPORTER"/>
    <property type="match status" value="1"/>
</dbReference>
<dbReference type="Pfam" id="PF00375">
    <property type="entry name" value="SDF"/>
    <property type="match status" value="1"/>
</dbReference>
<dbReference type="PRINTS" id="PR00173">
    <property type="entry name" value="EDTRNSPORT"/>
</dbReference>
<dbReference type="SUPFAM" id="SSF118215">
    <property type="entry name" value="Proton glutamate symport protein"/>
    <property type="match status" value="1"/>
</dbReference>
<dbReference type="PROSITE" id="PS00713">
    <property type="entry name" value="NA_DICARBOXYL_SYMP_1"/>
    <property type="match status" value="1"/>
</dbReference>
<dbReference type="PROSITE" id="PS00714">
    <property type="entry name" value="NA_DICARBOXYL_SYMP_2"/>
    <property type="match status" value="1"/>
</dbReference>
<comment type="function">
    <text evidence="1">Responsible for the transport of dicarboxylates such as succinate, fumarate, and malate from the periplasm across the membrane.</text>
</comment>
<comment type="subcellular location">
    <subcellularLocation>
        <location evidence="1">Cell inner membrane</location>
        <topology evidence="1">Multi-pass membrane protein</topology>
    </subcellularLocation>
</comment>
<comment type="similarity">
    <text evidence="1">Belongs to the dicarboxylate/amino acid:cation symporter (DAACS) (TC 2.A.23) family.</text>
</comment>
<reference key="1">
    <citation type="journal article" date="2006" name="J. Bacteriol.">
        <title>Complete genome sequence of Yersinia pestis strains Antiqua and Nepal516: evidence of gene reduction in an emerging pathogen.</title>
        <authorList>
            <person name="Chain P.S.G."/>
            <person name="Hu P."/>
            <person name="Malfatti S.A."/>
            <person name="Radnedge L."/>
            <person name="Larimer F."/>
            <person name="Vergez L.M."/>
            <person name="Worsham P."/>
            <person name="Chu M.C."/>
            <person name="Andersen G.L."/>
        </authorList>
    </citation>
    <scope>NUCLEOTIDE SEQUENCE [LARGE SCALE GENOMIC DNA]</scope>
    <source>
        <strain>Antiqua</strain>
    </source>
</reference>
<feature type="chain" id="PRO_1000067475" description="C4-dicarboxylate transport protein">
    <location>
        <begin position="1"/>
        <end position="429"/>
    </location>
</feature>
<feature type="transmembrane region" description="Helical" evidence="1">
    <location>
        <begin position="3"/>
        <end position="23"/>
    </location>
</feature>
<feature type="transmembrane region" description="Helical" evidence="1">
    <location>
        <begin position="44"/>
        <end position="64"/>
    </location>
</feature>
<feature type="transmembrane region" description="Helical" evidence="1">
    <location>
        <begin position="76"/>
        <end position="96"/>
    </location>
</feature>
<feature type="transmembrane region" description="Helical" evidence="1">
    <location>
        <begin position="144"/>
        <end position="164"/>
    </location>
</feature>
<feature type="transmembrane region" description="Helical" evidence="1">
    <location>
        <begin position="184"/>
        <end position="204"/>
    </location>
</feature>
<feature type="transmembrane region" description="Helical" evidence="1">
    <location>
        <begin position="222"/>
        <end position="242"/>
    </location>
</feature>
<feature type="transmembrane region" description="Helical" evidence="1">
    <location>
        <begin position="331"/>
        <end position="351"/>
    </location>
</feature>
<feature type="transmembrane region" description="Helical" evidence="1">
    <location>
        <begin position="352"/>
        <end position="372"/>
    </location>
</feature>
<keyword id="KW-0997">Cell inner membrane</keyword>
<keyword id="KW-1003">Cell membrane</keyword>
<keyword id="KW-0472">Membrane</keyword>
<keyword id="KW-0769">Symport</keyword>
<keyword id="KW-0812">Transmembrane</keyword>
<keyword id="KW-1133">Transmembrane helix</keyword>
<keyword id="KW-0813">Transport</keyword>
<accession>Q1C190</accession>